<name>LDH_BORT9</name>
<proteinExistence type="inferred from homology"/>
<sequence>MLKRNKVVLVGAGGVGSSFAYALTIDNSLVHELIIIDLAQDKAKGEVMDLNHGQMFLEKNIKIEFGNYDDCSDADIVVITAGLNQKPGETRLDLVGKNTKIFKEIVTSVVSSGFSGIFVIASNPVDIMTYVTMKYSNFPTHKVIGTGTTLDTSRLRYFLAERFNVNTQNIHSYIMGEHGDSSFATWDETKIAMKSLSEYLAEGKVSDAELDEMHKNVVNAAYEVIKLKGATYYAIGLGIKKIVNAIISDQNLILPISSYINGQYGNFVKDIYIGAPSVVCKDGIKEVLDFTISDRELEKFKISASQLKSYIDKIEF</sequence>
<dbReference type="EC" id="1.1.1.27" evidence="1"/>
<dbReference type="EMBL" id="CP000049">
    <property type="protein sequence ID" value="AAX17428.1"/>
    <property type="molecule type" value="Genomic_DNA"/>
</dbReference>
<dbReference type="RefSeq" id="WP_011772047.1">
    <property type="nucleotide sequence ID" value="NC_008710.1"/>
</dbReference>
<dbReference type="SMR" id="A1QYN6"/>
<dbReference type="KEGG" id="btu:BT0087"/>
<dbReference type="eggNOG" id="COG0039">
    <property type="taxonomic scope" value="Bacteria"/>
</dbReference>
<dbReference type="HOGENOM" id="CLU_045401_1_1_12"/>
<dbReference type="UniPathway" id="UPA00554">
    <property type="reaction ID" value="UER00611"/>
</dbReference>
<dbReference type="Proteomes" id="UP000001205">
    <property type="component" value="Chromosome"/>
</dbReference>
<dbReference type="GO" id="GO:0005737">
    <property type="term" value="C:cytoplasm"/>
    <property type="evidence" value="ECO:0007669"/>
    <property type="project" value="UniProtKB-SubCell"/>
</dbReference>
<dbReference type="GO" id="GO:0004459">
    <property type="term" value="F:L-lactate dehydrogenase activity"/>
    <property type="evidence" value="ECO:0007669"/>
    <property type="project" value="UniProtKB-UniRule"/>
</dbReference>
<dbReference type="GO" id="GO:0006096">
    <property type="term" value="P:glycolytic process"/>
    <property type="evidence" value="ECO:0007669"/>
    <property type="project" value="UniProtKB-UniRule"/>
</dbReference>
<dbReference type="GO" id="GO:0006089">
    <property type="term" value="P:lactate metabolic process"/>
    <property type="evidence" value="ECO:0007669"/>
    <property type="project" value="TreeGrafter"/>
</dbReference>
<dbReference type="CDD" id="cd05291">
    <property type="entry name" value="HicDH_like"/>
    <property type="match status" value="1"/>
</dbReference>
<dbReference type="FunFam" id="3.40.50.720:FF:000018">
    <property type="entry name" value="Malate dehydrogenase"/>
    <property type="match status" value="1"/>
</dbReference>
<dbReference type="Gene3D" id="3.90.110.10">
    <property type="entry name" value="Lactate dehydrogenase/glycoside hydrolase, family 4, C-terminal"/>
    <property type="match status" value="1"/>
</dbReference>
<dbReference type="Gene3D" id="3.40.50.720">
    <property type="entry name" value="NAD(P)-binding Rossmann-like Domain"/>
    <property type="match status" value="1"/>
</dbReference>
<dbReference type="HAMAP" id="MF_00488">
    <property type="entry name" value="Lactate_dehydrog"/>
    <property type="match status" value="1"/>
</dbReference>
<dbReference type="InterPro" id="IPR001557">
    <property type="entry name" value="L-lactate/malate_DH"/>
</dbReference>
<dbReference type="InterPro" id="IPR011304">
    <property type="entry name" value="L-lactate_DH"/>
</dbReference>
<dbReference type="InterPro" id="IPR018177">
    <property type="entry name" value="L-lactate_DH_AS"/>
</dbReference>
<dbReference type="InterPro" id="IPR022383">
    <property type="entry name" value="Lactate/malate_DH_C"/>
</dbReference>
<dbReference type="InterPro" id="IPR001236">
    <property type="entry name" value="Lactate/malate_DH_N"/>
</dbReference>
<dbReference type="InterPro" id="IPR015955">
    <property type="entry name" value="Lactate_DH/Glyco_Ohase_4_C"/>
</dbReference>
<dbReference type="InterPro" id="IPR036291">
    <property type="entry name" value="NAD(P)-bd_dom_sf"/>
</dbReference>
<dbReference type="NCBIfam" id="TIGR01771">
    <property type="entry name" value="L-LDH-NAD"/>
    <property type="match status" value="1"/>
</dbReference>
<dbReference type="NCBIfam" id="NF000824">
    <property type="entry name" value="PRK00066.1"/>
    <property type="match status" value="1"/>
</dbReference>
<dbReference type="PANTHER" id="PTHR43128">
    <property type="entry name" value="L-2-HYDROXYCARBOXYLATE DEHYDROGENASE (NAD(P)(+))"/>
    <property type="match status" value="1"/>
</dbReference>
<dbReference type="PANTHER" id="PTHR43128:SF16">
    <property type="entry name" value="L-LACTATE DEHYDROGENASE"/>
    <property type="match status" value="1"/>
</dbReference>
<dbReference type="Pfam" id="PF02866">
    <property type="entry name" value="Ldh_1_C"/>
    <property type="match status" value="1"/>
</dbReference>
<dbReference type="Pfam" id="PF00056">
    <property type="entry name" value="Ldh_1_N"/>
    <property type="match status" value="1"/>
</dbReference>
<dbReference type="PIRSF" id="PIRSF000102">
    <property type="entry name" value="Lac_mal_DH"/>
    <property type="match status" value="1"/>
</dbReference>
<dbReference type="PRINTS" id="PR00086">
    <property type="entry name" value="LLDHDRGNASE"/>
</dbReference>
<dbReference type="SUPFAM" id="SSF56327">
    <property type="entry name" value="LDH C-terminal domain-like"/>
    <property type="match status" value="1"/>
</dbReference>
<dbReference type="SUPFAM" id="SSF51735">
    <property type="entry name" value="NAD(P)-binding Rossmann-fold domains"/>
    <property type="match status" value="1"/>
</dbReference>
<dbReference type="PROSITE" id="PS00064">
    <property type="entry name" value="L_LDH"/>
    <property type="match status" value="1"/>
</dbReference>
<gene>
    <name evidence="1" type="primary">ldh</name>
    <name type="ordered locus">BT0087</name>
</gene>
<feature type="chain" id="PRO_1000190773" description="L-lactate dehydrogenase">
    <location>
        <begin position="1"/>
        <end position="316"/>
    </location>
</feature>
<feature type="active site" description="Proton acceptor" evidence="1">
    <location>
        <position position="178"/>
    </location>
</feature>
<feature type="binding site" evidence="1">
    <location>
        <position position="15"/>
    </location>
    <ligand>
        <name>NAD(+)</name>
        <dbReference type="ChEBI" id="CHEBI:57540"/>
    </ligand>
</feature>
<feature type="binding site" evidence="1">
    <location>
        <position position="37"/>
    </location>
    <ligand>
        <name>NAD(+)</name>
        <dbReference type="ChEBI" id="CHEBI:57540"/>
    </ligand>
</feature>
<feature type="binding site" evidence="1">
    <location>
        <position position="42"/>
    </location>
    <ligand>
        <name>NAD(+)</name>
        <dbReference type="ChEBI" id="CHEBI:57540"/>
    </ligand>
</feature>
<feature type="binding site" evidence="1">
    <location>
        <position position="68"/>
    </location>
    <ligand>
        <name>NAD(+)</name>
        <dbReference type="ChEBI" id="CHEBI:57540"/>
    </ligand>
</feature>
<feature type="binding site" evidence="1">
    <location>
        <begin position="82"/>
        <end position="83"/>
    </location>
    <ligand>
        <name>NAD(+)</name>
        <dbReference type="ChEBI" id="CHEBI:57540"/>
    </ligand>
</feature>
<feature type="binding site" evidence="1">
    <location>
        <position position="85"/>
    </location>
    <ligand>
        <name>substrate</name>
    </ligand>
</feature>
<feature type="binding site" evidence="1">
    <location>
        <position position="91"/>
    </location>
    <ligand>
        <name>substrate</name>
    </ligand>
</feature>
<feature type="binding site" evidence="1">
    <location>
        <begin position="121"/>
        <end position="123"/>
    </location>
    <ligand>
        <name>NAD(+)</name>
        <dbReference type="ChEBI" id="CHEBI:57540"/>
    </ligand>
</feature>
<feature type="binding site" evidence="1">
    <location>
        <begin position="123"/>
        <end position="126"/>
    </location>
    <ligand>
        <name>substrate</name>
    </ligand>
</feature>
<feature type="binding site" evidence="1">
    <location>
        <position position="146"/>
    </location>
    <ligand>
        <name>NAD(+)</name>
        <dbReference type="ChEBI" id="CHEBI:57540"/>
    </ligand>
</feature>
<feature type="binding site" evidence="1">
    <location>
        <begin position="151"/>
        <end position="154"/>
    </location>
    <ligand>
        <name>substrate</name>
    </ligand>
</feature>
<feature type="binding site" evidence="1">
    <location>
        <position position="156"/>
    </location>
    <ligand>
        <name>beta-D-fructose 1,6-bisphosphate</name>
        <dbReference type="ChEBI" id="CHEBI:32966"/>
        <note>allosteric activator</note>
    </ligand>
</feature>
<feature type="binding site" evidence="1">
    <location>
        <position position="171"/>
    </location>
    <ligand>
        <name>beta-D-fructose 1,6-bisphosphate</name>
        <dbReference type="ChEBI" id="CHEBI:32966"/>
        <note>allosteric activator</note>
    </ligand>
</feature>
<feature type="binding site" evidence="1">
    <location>
        <position position="231"/>
    </location>
    <ligand>
        <name>substrate</name>
    </ligand>
</feature>
<feature type="modified residue" description="Phosphotyrosine" evidence="1">
    <location>
        <position position="222"/>
    </location>
</feature>
<keyword id="KW-0021">Allosteric enzyme</keyword>
<keyword id="KW-0963">Cytoplasm</keyword>
<keyword id="KW-0520">NAD</keyword>
<keyword id="KW-0560">Oxidoreductase</keyword>
<keyword id="KW-0597">Phosphoprotein</keyword>
<keyword id="KW-1185">Reference proteome</keyword>
<organism>
    <name type="scientific">Borrelia turicatae (strain 91E135)</name>
    <dbReference type="NCBI Taxonomy" id="314724"/>
    <lineage>
        <taxon>Bacteria</taxon>
        <taxon>Pseudomonadati</taxon>
        <taxon>Spirochaetota</taxon>
        <taxon>Spirochaetia</taxon>
        <taxon>Spirochaetales</taxon>
        <taxon>Borreliaceae</taxon>
        <taxon>Borrelia</taxon>
    </lineage>
</organism>
<evidence type="ECO:0000255" key="1">
    <source>
        <dbReference type="HAMAP-Rule" id="MF_00488"/>
    </source>
</evidence>
<accession>A1QYN6</accession>
<protein>
    <recommendedName>
        <fullName evidence="1">L-lactate dehydrogenase</fullName>
        <shortName evidence="1">L-LDH</shortName>
        <ecNumber evidence="1">1.1.1.27</ecNumber>
    </recommendedName>
</protein>
<reference key="1">
    <citation type="submission" date="2004-12" db="EMBL/GenBank/DDBJ databases">
        <title>The genome sequence of Borrelia hermsii and Borrelia turicatae: comparative analysis of two agents of endemic N. America relapsing fever.</title>
        <authorList>
            <person name="Porcella S.F."/>
            <person name="Raffel S.J."/>
            <person name="Schrumpf M.E."/>
            <person name="Montgomery B."/>
            <person name="Smith T."/>
            <person name="Schwan T.G."/>
        </authorList>
    </citation>
    <scope>NUCLEOTIDE SEQUENCE [LARGE SCALE GENOMIC DNA]</scope>
    <source>
        <strain>91E135</strain>
    </source>
</reference>
<comment type="function">
    <text evidence="1">Catalyzes the conversion of lactate to pyruvate.</text>
</comment>
<comment type="catalytic activity">
    <reaction evidence="1">
        <text>(S)-lactate + NAD(+) = pyruvate + NADH + H(+)</text>
        <dbReference type="Rhea" id="RHEA:23444"/>
        <dbReference type="ChEBI" id="CHEBI:15361"/>
        <dbReference type="ChEBI" id="CHEBI:15378"/>
        <dbReference type="ChEBI" id="CHEBI:16651"/>
        <dbReference type="ChEBI" id="CHEBI:57540"/>
        <dbReference type="ChEBI" id="CHEBI:57945"/>
        <dbReference type="EC" id="1.1.1.27"/>
    </reaction>
</comment>
<comment type="activity regulation">
    <text evidence="1">Allosterically activated by fructose 1,6-bisphosphate (FBP).</text>
</comment>
<comment type="pathway">
    <text evidence="1">Fermentation; pyruvate fermentation to lactate; (S)-lactate from pyruvate: step 1/1.</text>
</comment>
<comment type="subunit">
    <text evidence="1">Homotetramer.</text>
</comment>
<comment type="subcellular location">
    <subcellularLocation>
        <location evidence="1">Cytoplasm</location>
    </subcellularLocation>
</comment>
<comment type="similarity">
    <text evidence="1">Belongs to the LDH/MDH superfamily. LDH family.</text>
</comment>